<protein>
    <recommendedName>
        <fullName>Troponin C, slow skeletal and cardiac muscles</fullName>
        <shortName>TN-C</shortName>
    </recommendedName>
</protein>
<sequence>MDDIYKAAVEQLTEEQKNEFKAAFDIFVLGAEDGCISTKELGKVMRMLGQNPTPEELQEMIDEVDEDGSGTVDFDEFLVMMVRCMKDDSKGKTEEELSDLFRMFDKNADGYIDLEELKIMLQATGETITEDDIEELMKDGDKNNDGRIDYDEFLEFMKGVE</sequence>
<gene>
    <name type="primary">TNNC1</name>
</gene>
<keyword id="KW-0002">3D-structure</keyword>
<keyword id="KW-0007">Acetylation</keyword>
<keyword id="KW-0106">Calcium</keyword>
<keyword id="KW-0479">Metal-binding</keyword>
<keyword id="KW-0514">Muscle protein</keyword>
<keyword id="KW-1185">Reference proteome</keyword>
<keyword id="KW-0677">Repeat</keyword>
<proteinExistence type="evidence at protein level"/>
<name>TNNC1_CHICK</name>
<accession>P09860</accession>
<comment type="function">
    <text>Troponin is the central regulatory protein of striated muscle contraction. Tn consists of three components: Tn-I which is the inhibitor of actomyosin ATPase, Tn-T which contains the binding site for tropomyosin and Tn-C. The binding of calcium to Tn-C abolishes the inhibitory action of Tn on actin filaments.</text>
</comment>
<comment type="miscellaneous">
    <text>Slow skeletal muscle Tn-C can bind 3 calcium ions per molecule. Domain I does not bind calcium.</text>
</comment>
<comment type="similarity">
    <text evidence="3">Belongs to the troponin C family.</text>
</comment>
<organism>
    <name type="scientific">Gallus gallus</name>
    <name type="common">Chicken</name>
    <dbReference type="NCBI Taxonomy" id="9031"/>
    <lineage>
        <taxon>Eukaryota</taxon>
        <taxon>Metazoa</taxon>
        <taxon>Chordata</taxon>
        <taxon>Craniata</taxon>
        <taxon>Vertebrata</taxon>
        <taxon>Euteleostomi</taxon>
        <taxon>Archelosauria</taxon>
        <taxon>Archosauria</taxon>
        <taxon>Dinosauria</taxon>
        <taxon>Saurischia</taxon>
        <taxon>Theropoda</taxon>
        <taxon>Coelurosauria</taxon>
        <taxon>Aves</taxon>
        <taxon>Neognathae</taxon>
        <taxon>Galloanserae</taxon>
        <taxon>Galliformes</taxon>
        <taxon>Phasianidae</taxon>
        <taxon>Phasianinae</taxon>
        <taxon>Gallus</taxon>
    </lineage>
</organism>
<feature type="chain" id="PRO_0000073701" description="Troponin C, slow skeletal and cardiac muscles">
    <location>
        <begin position="1"/>
        <end position="161"/>
    </location>
</feature>
<feature type="domain" description="EF-hand 1" evidence="2">
    <location>
        <begin position="16"/>
        <end position="51"/>
    </location>
</feature>
<feature type="domain" description="EF-hand 2" evidence="2">
    <location>
        <begin position="52"/>
        <end position="87"/>
    </location>
</feature>
<feature type="domain" description="EF-hand 3" evidence="2">
    <location>
        <begin position="92"/>
        <end position="127"/>
    </location>
</feature>
<feature type="domain" description="EF-hand 4" evidence="2">
    <location>
        <begin position="128"/>
        <end position="161"/>
    </location>
</feature>
<feature type="binding site" evidence="2">
    <location>
        <position position="65"/>
    </location>
    <ligand>
        <name>Ca(2+)</name>
        <dbReference type="ChEBI" id="CHEBI:29108"/>
        <label>1</label>
    </ligand>
</feature>
<feature type="binding site" evidence="2">
    <location>
        <position position="67"/>
    </location>
    <ligand>
        <name>Ca(2+)</name>
        <dbReference type="ChEBI" id="CHEBI:29108"/>
        <label>1</label>
    </ligand>
</feature>
<feature type="binding site" evidence="2">
    <location>
        <position position="69"/>
    </location>
    <ligand>
        <name>Ca(2+)</name>
        <dbReference type="ChEBI" id="CHEBI:29108"/>
        <label>1</label>
    </ligand>
</feature>
<feature type="binding site" evidence="2">
    <location>
        <position position="71"/>
    </location>
    <ligand>
        <name>Ca(2+)</name>
        <dbReference type="ChEBI" id="CHEBI:29108"/>
        <label>1</label>
    </ligand>
</feature>
<feature type="binding site" evidence="2">
    <location>
        <position position="76"/>
    </location>
    <ligand>
        <name>Ca(2+)</name>
        <dbReference type="ChEBI" id="CHEBI:29108"/>
        <label>1</label>
    </ligand>
</feature>
<feature type="binding site" evidence="2">
    <location>
        <position position="105"/>
    </location>
    <ligand>
        <name>Ca(2+)</name>
        <dbReference type="ChEBI" id="CHEBI:29108"/>
        <label>2</label>
    </ligand>
</feature>
<feature type="binding site" evidence="2">
    <location>
        <position position="107"/>
    </location>
    <ligand>
        <name>Ca(2+)</name>
        <dbReference type="ChEBI" id="CHEBI:29108"/>
        <label>2</label>
    </ligand>
</feature>
<feature type="binding site" evidence="2">
    <location>
        <position position="109"/>
    </location>
    <ligand>
        <name>Ca(2+)</name>
        <dbReference type="ChEBI" id="CHEBI:29108"/>
        <label>2</label>
    </ligand>
</feature>
<feature type="binding site" evidence="2">
    <location>
        <position position="111"/>
    </location>
    <ligand>
        <name>Ca(2+)</name>
        <dbReference type="ChEBI" id="CHEBI:29108"/>
        <label>2</label>
    </ligand>
</feature>
<feature type="binding site" evidence="2">
    <location>
        <position position="116"/>
    </location>
    <ligand>
        <name>Ca(2+)</name>
        <dbReference type="ChEBI" id="CHEBI:29108"/>
        <label>2</label>
    </ligand>
</feature>
<feature type="binding site" evidence="2">
    <location>
        <position position="141"/>
    </location>
    <ligand>
        <name>Ca(2+)</name>
        <dbReference type="ChEBI" id="CHEBI:29108"/>
        <label>3</label>
    </ligand>
</feature>
<feature type="binding site" evidence="2">
    <location>
        <position position="143"/>
    </location>
    <ligand>
        <name>Ca(2+)</name>
        <dbReference type="ChEBI" id="CHEBI:29108"/>
        <label>3</label>
    </ligand>
</feature>
<feature type="binding site" evidence="2">
    <location>
        <position position="145"/>
    </location>
    <ligand>
        <name>Ca(2+)</name>
        <dbReference type="ChEBI" id="CHEBI:29108"/>
        <label>3</label>
    </ligand>
</feature>
<feature type="binding site" evidence="2">
    <location>
        <position position="147"/>
    </location>
    <ligand>
        <name>Ca(2+)</name>
        <dbReference type="ChEBI" id="CHEBI:29108"/>
        <label>3</label>
    </ligand>
</feature>
<feature type="binding site" evidence="2">
    <location>
        <position position="152"/>
    </location>
    <ligand>
        <name>Ca(2+)</name>
        <dbReference type="ChEBI" id="CHEBI:29108"/>
        <label>3</label>
    </ligand>
</feature>
<feature type="modified residue" description="N-acetylmethionine" evidence="1">
    <location>
        <position position="1"/>
    </location>
</feature>
<feature type="helix" evidence="5">
    <location>
        <begin position="8"/>
        <end position="11"/>
    </location>
</feature>
<feature type="helix" evidence="5">
    <location>
        <begin position="14"/>
        <end position="27"/>
    </location>
</feature>
<feature type="turn" evidence="5">
    <location>
        <begin position="28"/>
        <end position="30"/>
    </location>
</feature>
<feature type="helix" evidence="5">
    <location>
        <begin position="32"/>
        <end position="34"/>
    </location>
</feature>
<feature type="helix" evidence="5">
    <location>
        <begin position="38"/>
        <end position="47"/>
    </location>
</feature>
<feature type="helix" evidence="5">
    <location>
        <begin position="54"/>
        <end position="64"/>
    </location>
</feature>
<feature type="strand" evidence="5">
    <location>
        <begin position="68"/>
        <end position="72"/>
    </location>
</feature>
<feature type="helix" evidence="5">
    <location>
        <begin position="74"/>
        <end position="85"/>
    </location>
</feature>
<feature type="strand" evidence="4">
    <location>
        <begin position="86"/>
        <end position="90"/>
    </location>
</feature>
<feature type="helix" evidence="5">
    <location>
        <begin position="93"/>
        <end position="104"/>
    </location>
</feature>
<feature type="strand" evidence="5">
    <location>
        <begin position="109"/>
        <end position="113"/>
    </location>
</feature>
<feature type="helix" evidence="5">
    <location>
        <begin position="114"/>
        <end position="117"/>
    </location>
</feature>
<feature type="helix" evidence="5">
    <location>
        <begin position="118"/>
        <end position="121"/>
    </location>
</feature>
<feature type="strand" evidence="6">
    <location>
        <begin position="124"/>
        <end position="126"/>
    </location>
</feature>
<feature type="helix" evidence="5">
    <location>
        <begin position="130"/>
        <end position="140"/>
    </location>
</feature>
<feature type="strand" evidence="7">
    <location>
        <begin position="141"/>
        <end position="143"/>
    </location>
</feature>
<feature type="strand" evidence="5">
    <location>
        <begin position="144"/>
        <end position="149"/>
    </location>
</feature>
<feature type="helix" evidence="5">
    <location>
        <begin position="150"/>
        <end position="158"/>
    </location>
</feature>
<evidence type="ECO:0000250" key="1"/>
<evidence type="ECO:0000255" key="2">
    <source>
        <dbReference type="PROSITE-ProRule" id="PRU00448"/>
    </source>
</evidence>
<evidence type="ECO:0000305" key="3"/>
<evidence type="ECO:0007829" key="4">
    <source>
        <dbReference type="PDB" id="1AJ4"/>
    </source>
</evidence>
<evidence type="ECO:0007829" key="5">
    <source>
        <dbReference type="PDB" id="1DTL"/>
    </source>
</evidence>
<evidence type="ECO:0007829" key="6">
    <source>
        <dbReference type="PDB" id="1FI5"/>
    </source>
</evidence>
<evidence type="ECO:0007829" key="7">
    <source>
        <dbReference type="PDB" id="3CTN"/>
    </source>
</evidence>
<dbReference type="EMBL" id="M16024">
    <property type="protein sequence ID" value="AAA48654.1"/>
    <property type="molecule type" value="mRNA"/>
</dbReference>
<dbReference type="EMBL" id="D13037">
    <property type="protein sequence ID" value="BAA02369.1"/>
    <property type="molecule type" value="mRNA"/>
</dbReference>
<dbReference type="PIR" id="A27204">
    <property type="entry name" value="A27204"/>
</dbReference>
<dbReference type="RefSeq" id="NP_990464.1">
    <property type="nucleotide sequence ID" value="NM_205133.2"/>
</dbReference>
<dbReference type="PDB" id="1AJ4">
    <property type="method" value="NMR"/>
    <property type="chains" value="A=3-161"/>
</dbReference>
<dbReference type="PDB" id="1DTL">
    <property type="method" value="X-ray"/>
    <property type="resolution" value="2.15 A"/>
    <property type="chains" value="A=1-161"/>
</dbReference>
<dbReference type="PDB" id="1FI5">
    <property type="method" value="NMR"/>
    <property type="chains" value="A=81-161"/>
</dbReference>
<dbReference type="PDB" id="1LA0">
    <property type="method" value="NMR"/>
    <property type="chains" value="A=1-161"/>
</dbReference>
<dbReference type="PDB" id="1SBJ">
    <property type="method" value="NMR"/>
    <property type="chains" value="A=81-161"/>
</dbReference>
<dbReference type="PDB" id="1SCV">
    <property type="method" value="NMR"/>
    <property type="chains" value="A=81-161"/>
</dbReference>
<dbReference type="PDB" id="2CTN">
    <property type="method" value="NMR"/>
    <property type="chains" value="A=3-89"/>
</dbReference>
<dbReference type="PDB" id="3CTN">
    <property type="method" value="NMR"/>
    <property type="chains" value="A=86-161"/>
</dbReference>
<dbReference type="PDBsum" id="1AJ4"/>
<dbReference type="PDBsum" id="1DTL"/>
<dbReference type="PDBsum" id="1FI5"/>
<dbReference type="PDBsum" id="1LA0"/>
<dbReference type="PDBsum" id="1SBJ"/>
<dbReference type="PDBsum" id="1SCV"/>
<dbReference type="PDBsum" id="2CTN"/>
<dbReference type="PDBsum" id="3CTN"/>
<dbReference type="BMRB" id="P09860"/>
<dbReference type="SMR" id="P09860"/>
<dbReference type="BioGRID" id="676302">
    <property type="interactions" value="1"/>
</dbReference>
<dbReference type="FunCoup" id="P09860">
    <property type="interactions" value="48"/>
</dbReference>
<dbReference type="STRING" id="9031.ENSGALP00000002212"/>
<dbReference type="PaxDb" id="9031-ENSGALP00000002212"/>
<dbReference type="Ensembl" id="ENSGALT00010067918.1">
    <property type="protein sequence ID" value="ENSGALP00010041661.1"/>
    <property type="gene ID" value="ENSGALG00010028025.1"/>
</dbReference>
<dbReference type="GeneID" id="396032"/>
<dbReference type="KEGG" id="gga:396032"/>
<dbReference type="CTD" id="7134"/>
<dbReference type="VEuPathDB" id="HostDB:geneid_396032"/>
<dbReference type="eggNOG" id="KOG0027">
    <property type="taxonomic scope" value="Eukaryota"/>
</dbReference>
<dbReference type="GeneTree" id="ENSGT00940000153541"/>
<dbReference type="HOGENOM" id="CLU_061288_2_5_1"/>
<dbReference type="InParanoid" id="P09860"/>
<dbReference type="OMA" id="QKSEFRA"/>
<dbReference type="OrthoDB" id="26525at2759"/>
<dbReference type="PhylomeDB" id="P09860"/>
<dbReference type="TreeFam" id="TF318191"/>
<dbReference type="Reactome" id="R-GGA-390522">
    <property type="pathway name" value="Striated Muscle Contraction"/>
</dbReference>
<dbReference type="EvolutionaryTrace" id="P09860"/>
<dbReference type="PRO" id="PR:P09860"/>
<dbReference type="Proteomes" id="UP000000539">
    <property type="component" value="Chromosome 12"/>
</dbReference>
<dbReference type="Bgee" id="ENSGALG00000001459">
    <property type="expression patterns" value="Expressed in heart and 14 other cell types or tissues"/>
</dbReference>
<dbReference type="GO" id="GO:1990584">
    <property type="term" value="C:cardiac Troponin complex"/>
    <property type="evidence" value="ECO:0000318"/>
    <property type="project" value="GO_Central"/>
</dbReference>
<dbReference type="GO" id="GO:0005509">
    <property type="term" value="F:calcium ion binding"/>
    <property type="evidence" value="ECO:0000250"/>
    <property type="project" value="AgBase"/>
</dbReference>
<dbReference type="GO" id="GO:0048306">
    <property type="term" value="F:calcium-dependent protein binding"/>
    <property type="evidence" value="ECO:0000318"/>
    <property type="project" value="GO_Central"/>
</dbReference>
<dbReference type="GO" id="GO:0031013">
    <property type="term" value="F:troponin I binding"/>
    <property type="evidence" value="ECO:0000318"/>
    <property type="project" value="GO_Central"/>
</dbReference>
<dbReference type="GO" id="GO:0060048">
    <property type="term" value="P:cardiac muscle contraction"/>
    <property type="evidence" value="ECO:0000318"/>
    <property type="project" value="GO_Central"/>
</dbReference>
<dbReference type="GO" id="GO:0003009">
    <property type="term" value="P:skeletal muscle contraction"/>
    <property type="evidence" value="ECO:0000318"/>
    <property type="project" value="GO_Central"/>
</dbReference>
<dbReference type="CDD" id="cd00051">
    <property type="entry name" value="EFh"/>
    <property type="match status" value="2"/>
</dbReference>
<dbReference type="FunFam" id="1.10.238.10:FF:000033">
    <property type="entry name" value="Troponin C, slow skeletal and cardiac muscles"/>
    <property type="match status" value="1"/>
</dbReference>
<dbReference type="Gene3D" id="1.10.238.10">
    <property type="entry name" value="EF-hand"/>
    <property type="match status" value="2"/>
</dbReference>
<dbReference type="InterPro" id="IPR050230">
    <property type="entry name" value="CALM/Myosin/TropC-like"/>
</dbReference>
<dbReference type="InterPro" id="IPR011992">
    <property type="entry name" value="EF-hand-dom_pair"/>
</dbReference>
<dbReference type="InterPro" id="IPR018247">
    <property type="entry name" value="EF_Hand_1_Ca_BS"/>
</dbReference>
<dbReference type="InterPro" id="IPR002048">
    <property type="entry name" value="EF_hand_dom"/>
</dbReference>
<dbReference type="PANTHER" id="PTHR23048">
    <property type="entry name" value="MYOSIN LIGHT CHAIN 1, 3"/>
    <property type="match status" value="1"/>
</dbReference>
<dbReference type="PANTHER" id="PTHR23048:SF47">
    <property type="entry name" value="TROPONIN C1, SLOW SKELETAL AND CARDIAC TYPE"/>
    <property type="match status" value="1"/>
</dbReference>
<dbReference type="Pfam" id="PF13499">
    <property type="entry name" value="EF-hand_7"/>
    <property type="match status" value="1"/>
</dbReference>
<dbReference type="Pfam" id="PF13833">
    <property type="entry name" value="EF-hand_8"/>
    <property type="match status" value="1"/>
</dbReference>
<dbReference type="PRINTS" id="PR00450">
    <property type="entry name" value="RECOVERIN"/>
</dbReference>
<dbReference type="SMART" id="SM00054">
    <property type="entry name" value="EFh"/>
    <property type="match status" value="4"/>
</dbReference>
<dbReference type="SUPFAM" id="SSF47473">
    <property type="entry name" value="EF-hand"/>
    <property type="match status" value="1"/>
</dbReference>
<dbReference type="PROSITE" id="PS00018">
    <property type="entry name" value="EF_HAND_1"/>
    <property type="match status" value="3"/>
</dbReference>
<dbReference type="PROSITE" id="PS50222">
    <property type="entry name" value="EF_HAND_2"/>
    <property type="match status" value="4"/>
</dbReference>
<reference key="1">
    <citation type="journal article" date="1987" name="Mol. Cell. Biol.">
        <title>The nontranscribed chicken calmodulin pseudogene cross-hybridizes with mRNA from the slow-muscle troponin C gene.</title>
        <authorList>
            <person name="Putkey J.A."/>
            <person name="Carroll S.L."/>
            <person name="Means A.R."/>
        </authorList>
    </citation>
    <scope>NUCLEOTIDE SEQUENCE [MRNA]</scope>
    <source>
        <tissue>Slow skeletal muscle</tissue>
    </source>
</reference>
<reference key="2">
    <citation type="journal article" date="1989" name="Circ. Res.">
        <title>Molecular cloning and expression of chicken cardiac troponin C.</title>
        <authorList>
            <person name="Toyota N."/>
            <person name="Shimada Y."/>
            <person name="Bader D."/>
        </authorList>
    </citation>
    <scope>NUCLEOTIDE SEQUENCE [MRNA]</scope>
    <source>
        <tissue>Heart muscle</tissue>
    </source>
</reference>
<reference key="3">
    <citation type="journal article" date="1997" name="J. Biol. Chem.">
        <title>Structure of cardiac muscle troponin C unexpectedly reveals a closed regulatory domain.</title>
        <authorList>
            <person name="Sia S.K."/>
            <person name="Li M.X."/>
            <person name="Spyracopoulos L."/>
            <person name="Gagne S.M."/>
            <person name="Liu W."/>
            <person name="Putkey J.A."/>
            <person name="Sykes B.D."/>
        </authorList>
    </citation>
    <scope>STRUCTURE BY NMR OF 1-89</scope>
</reference>
<reference key="4">
    <citation type="journal article" date="1999" name="Biochemistry">
        <title>Solution structures of the C-terminal domain of cardiac troponin C free and bound to the N-terminal domain of cardiac troponin I.</title>
        <authorList>
            <person name="Gasmi-Seabrook G.M."/>
            <person name="Howarth J.W."/>
            <person name="Finley N."/>
            <person name="Abusamhadneh E."/>
            <person name="Gaponenko V."/>
            <person name="Brito R.M."/>
            <person name="Solaro R.J."/>
            <person name="Rosevear P.R."/>
        </authorList>
    </citation>
    <scope>STRUCTURE BY NMR OF 81-161</scope>
</reference>